<reference key="1">
    <citation type="journal article" date="1992" name="J. Biol. Chem.">
        <title>Cloning human pyrroline-5-carboxylate reductase cDNA by complementation in Saccharomyces cerevisiae.</title>
        <authorList>
            <person name="Dougherty K.M."/>
            <person name="Brandriss M.C."/>
            <person name="Valle D."/>
        </authorList>
    </citation>
    <scope>NUCLEOTIDE SEQUENCE [MRNA] (ISOFORM 1)</scope>
</reference>
<reference key="2">
    <citation type="submission" date="1999-12" db="EMBL/GenBank/DDBJ databases">
        <title>Novel Human cDNA clones with function of inhibiting cancer cell growth.</title>
        <authorList>
            <person name="Gu J.R."/>
            <person name="Wan D.F."/>
            <person name="Zhao X.T."/>
            <person name="Zhou X.M."/>
            <person name="Jiang H.Q."/>
            <person name="Zhang P.P."/>
            <person name="Qin W.X."/>
            <person name="Huang Y."/>
            <person name="Qiu X.K."/>
            <person name="Qian L.F."/>
            <person name="He L.P."/>
            <person name="Li H.N."/>
            <person name="Yu Y."/>
            <person name="Yu J."/>
            <person name="Han L.H."/>
        </authorList>
    </citation>
    <scope>NUCLEOTIDE SEQUENCE [MRNA] (ISOFORM 2)</scope>
</reference>
<reference key="3">
    <citation type="journal article" date="2004" name="Nat. Genet.">
        <title>Complete sequencing and characterization of 21,243 full-length human cDNAs.</title>
        <authorList>
            <person name="Ota T."/>
            <person name="Suzuki Y."/>
            <person name="Nishikawa T."/>
            <person name="Otsuki T."/>
            <person name="Sugiyama T."/>
            <person name="Irie R."/>
            <person name="Wakamatsu A."/>
            <person name="Hayashi K."/>
            <person name="Sato H."/>
            <person name="Nagai K."/>
            <person name="Kimura K."/>
            <person name="Makita H."/>
            <person name="Sekine M."/>
            <person name="Obayashi M."/>
            <person name="Nishi T."/>
            <person name="Shibahara T."/>
            <person name="Tanaka T."/>
            <person name="Ishii S."/>
            <person name="Yamamoto J."/>
            <person name="Saito K."/>
            <person name="Kawai Y."/>
            <person name="Isono Y."/>
            <person name="Nakamura Y."/>
            <person name="Nagahari K."/>
            <person name="Murakami K."/>
            <person name="Yasuda T."/>
            <person name="Iwayanagi T."/>
            <person name="Wagatsuma M."/>
            <person name="Shiratori A."/>
            <person name="Sudo H."/>
            <person name="Hosoiri T."/>
            <person name="Kaku Y."/>
            <person name="Kodaira H."/>
            <person name="Kondo H."/>
            <person name="Sugawara M."/>
            <person name="Takahashi M."/>
            <person name="Kanda K."/>
            <person name="Yokoi T."/>
            <person name="Furuya T."/>
            <person name="Kikkawa E."/>
            <person name="Omura Y."/>
            <person name="Abe K."/>
            <person name="Kamihara K."/>
            <person name="Katsuta N."/>
            <person name="Sato K."/>
            <person name="Tanikawa M."/>
            <person name="Yamazaki M."/>
            <person name="Ninomiya K."/>
            <person name="Ishibashi T."/>
            <person name="Yamashita H."/>
            <person name="Murakawa K."/>
            <person name="Fujimori K."/>
            <person name="Tanai H."/>
            <person name="Kimata M."/>
            <person name="Watanabe M."/>
            <person name="Hiraoka S."/>
            <person name="Chiba Y."/>
            <person name="Ishida S."/>
            <person name="Ono Y."/>
            <person name="Takiguchi S."/>
            <person name="Watanabe S."/>
            <person name="Yosida M."/>
            <person name="Hotuta T."/>
            <person name="Kusano J."/>
            <person name="Kanehori K."/>
            <person name="Takahashi-Fujii A."/>
            <person name="Hara H."/>
            <person name="Tanase T.-O."/>
            <person name="Nomura Y."/>
            <person name="Togiya S."/>
            <person name="Komai F."/>
            <person name="Hara R."/>
            <person name="Takeuchi K."/>
            <person name="Arita M."/>
            <person name="Imose N."/>
            <person name="Musashino K."/>
            <person name="Yuuki H."/>
            <person name="Oshima A."/>
            <person name="Sasaki N."/>
            <person name="Aotsuka S."/>
            <person name="Yoshikawa Y."/>
            <person name="Matsunawa H."/>
            <person name="Ichihara T."/>
            <person name="Shiohata N."/>
            <person name="Sano S."/>
            <person name="Moriya S."/>
            <person name="Momiyama H."/>
            <person name="Satoh N."/>
            <person name="Takami S."/>
            <person name="Terashima Y."/>
            <person name="Suzuki O."/>
            <person name="Nakagawa S."/>
            <person name="Senoh A."/>
            <person name="Mizoguchi H."/>
            <person name="Goto Y."/>
            <person name="Shimizu F."/>
            <person name="Wakebe H."/>
            <person name="Hishigaki H."/>
            <person name="Watanabe T."/>
            <person name="Sugiyama A."/>
            <person name="Takemoto M."/>
            <person name="Kawakami B."/>
            <person name="Yamazaki M."/>
            <person name="Watanabe K."/>
            <person name="Kumagai A."/>
            <person name="Itakura S."/>
            <person name="Fukuzumi Y."/>
            <person name="Fujimori Y."/>
            <person name="Komiyama M."/>
            <person name="Tashiro H."/>
            <person name="Tanigami A."/>
            <person name="Fujiwara T."/>
            <person name="Ono T."/>
            <person name="Yamada K."/>
            <person name="Fujii Y."/>
            <person name="Ozaki K."/>
            <person name="Hirao M."/>
            <person name="Ohmori Y."/>
            <person name="Kawabata A."/>
            <person name="Hikiji T."/>
            <person name="Kobatake N."/>
            <person name="Inagaki H."/>
            <person name="Ikema Y."/>
            <person name="Okamoto S."/>
            <person name="Okitani R."/>
            <person name="Kawakami T."/>
            <person name="Noguchi S."/>
            <person name="Itoh T."/>
            <person name="Shigeta K."/>
            <person name="Senba T."/>
            <person name="Matsumura K."/>
            <person name="Nakajima Y."/>
            <person name="Mizuno T."/>
            <person name="Morinaga M."/>
            <person name="Sasaki M."/>
            <person name="Togashi T."/>
            <person name="Oyama M."/>
            <person name="Hata H."/>
            <person name="Watanabe M."/>
            <person name="Komatsu T."/>
            <person name="Mizushima-Sugano J."/>
            <person name="Satoh T."/>
            <person name="Shirai Y."/>
            <person name="Takahashi Y."/>
            <person name="Nakagawa K."/>
            <person name="Okumura K."/>
            <person name="Nagase T."/>
            <person name="Nomura N."/>
            <person name="Kikuchi H."/>
            <person name="Masuho Y."/>
            <person name="Yamashita R."/>
            <person name="Nakai K."/>
            <person name="Yada T."/>
            <person name="Nakamura Y."/>
            <person name="Ohara O."/>
            <person name="Isogai T."/>
            <person name="Sugano S."/>
        </authorList>
    </citation>
    <scope>NUCLEOTIDE SEQUENCE [LARGE SCALE MRNA] (ISOFORM 3)</scope>
    <source>
        <tissue>Brain</tissue>
    </source>
</reference>
<reference key="4">
    <citation type="submission" date="2004-06" db="EMBL/GenBank/DDBJ databases">
        <title>Cloning of human full open reading frames in Gateway(TM) system entry vector (pDONR201).</title>
        <authorList>
            <person name="Halleck A."/>
            <person name="Ebert L."/>
            <person name="Mkoundinya M."/>
            <person name="Schick M."/>
            <person name="Eisenstein S."/>
            <person name="Neubert P."/>
            <person name="Kstrang K."/>
            <person name="Schatten R."/>
            <person name="Shen B."/>
            <person name="Henze S."/>
            <person name="Mar W."/>
            <person name="Korn B."/>
            <person name="Zuo D."/>
            <person name="Hu Y."/>
            <person name="LaBaer J."/>
        </authorList>
    </citation>
    <scope>NUCLEOTIDE SEQUENCE [LARGE SCALE MRNA] (ISOFORM 1)</scope>
</reference>
<reference key="5">
    <citation type="journal article" date="2006" name="Nature">
        <title>DNA sequence of human chromosome 17 and analysis of rearrangement in the human lineage.</title>
        <authorList>
            <person name="Zody M.C."/>
            <person name="Garber M."/>
            <person name="Adams D.J."/>
            <person name="Sharpe T."/>
            <person name="Harrow J."/>
            <person name="Lupski J.R."/>
            <person name="Nicholson C."/>
            <person name="Searle S.M."/>
            <person name="Wilming L."/>
            <person name="Young S.K."/>
            <person name="Abouelleil A."/>
            <person name="Allen N.R."/>
            <person name="Bi W."/>
            <person name="Bloom T."/>
            <person name="Borowsky M.L."/>
            <person name="Bugalter B.E."/>
            <person name="Butler J."/>
            <person name="Chang J.L."/>
            <person name="Chen C.-K."/>
            <person name="Cook A."/>
            <person name="Corum B."/>
            <person name="Cuomo C.A."/>
            <person name="de Jong P.J."/>
            <person name="DeCaprio D."/>
            <person name="Dewar K."/>
            <person name="FitzGerald M."/>
            <person name="Gilbert J."/>
            <person name="Gibson R."/>
            <person name="Gnerre S."/>
            <person name="Goldstein S."/>
            <person name="Grafham D.V."/>
            <person name="Grocock R."/>
            <person name="Hafez N."/>
            <person name="Hagopian D.S."/>
            <person name="Hart E."/>
            <person name="Norman C.H."/>
            <person name="Humphray S."/>
            <person name="Jaffe D.B."/>
            <person name="Jones M."/>
            <person name="Kamal M."/>
            <person name="Khodiyar V.K."/>
            <person name="LaButti K."/>
            <person name="Laird G."/>
            <person name="Lehoczky J."/>
            <person name="Liu X."/>
            <person name="Lokyitsang T."/>
            <person name="Loveland J."/>
            <person name="Lui A."/>
            <person name="Macdonald P."/>
            <person name="Major J.E."/>
            <person name="Matthews L."/>
            <person name="Mauceli E."/>
            <person name="McCarroll S.A."/>
            <person name="Mihalev A.H."/>
            <person name="Mudge J."/>
            <person name="Nguyen C."/>
            <person name="Nicol R."/>
            <person name="O'Leary S.B."/>
            <person name="Osoegawa K."/>
            <person name="Schwartz D.C."/>
            <person name="Shaw-Smith C."/>
            <person name="Stankiewicz P."/>
            <person name="Steward C."/>
            <person name="Swarbreck D."/>
            <person name="Venkataraman V."/>
            <person name="Whittaker C.A."/>
            <person name="Yang X."/>
            <person name="Zimmer A.R."/>
            <person name="Bradley A."/>
            <person name="Hubbard T."/>
            <person name="Birren B.W."/>
            <person name="Rogers J."/>
            <person name="Lander E.S."/>
            <person name="Nusbaum C."/>
        </authorList>
    </citation>
    <scope>NUCLEOTIDE SEQUENCE [LARGE SCALE GENOMIC DNA]</scope>
</reference>
<reference key="6">
    <citation type="submission" date="2005-07" db="EMBL/GenBank/DDBJ databases">
        <authorList>
            <person name="Mural R.J."/>
            <person name="Istrail S."/>
            <person name="Sutton G."/>
            <person name="Florea L."/>
            <person name="Halpern A.L."/>
            <person name="Mobarry C.M."/>
            <person name="Lippert R."/>
            <person name="Walenz B."/>
            <person name="Shatkay H."/>
            <person name="Dew I."/>
            <person name="Miller J.R."/>
            <person name="Flanigan M.J."/>
            <person name="Edwards N.J."/>
            <person name="Bolanos R."/>
            <person name="Fasulo D."/>
            <person name="Halldorsson B.V."/>
            <person name="Hannenhalli S."/>
            <person name="Turner R."/>
            <person name="Yooseph S."/>
            <person name="Lu F."/>
            <person name="Nusskern D.R."/>
            <person name="Shue B.C."/>
            <person name="Zheng X.H."/>
            <person name="Zhong F."/>
            <person name="Delcher A.L."/>
            <person name="Huson D.H."/>
            <person name="Kravitz S.A."/>
            <person name="Mouchard L."/>
            <person name="Reinert K."/>
            <person name="Remington K.A."/>
            <person name="Clark A.G."/>
            <person name="Waterman M.S."/>
            <person name="Eichler E.E."/>
            <person name="Adams M.D."/>
            <person name="Hunkapiller M.W."/>
            <person name="Myers E.W."/>
            <person name="Venter J.C."/>
        </authorList>
    </citation>
    <scope>NUCLEOTIDE SEQUENCE [LARGE SCALE GENOMIC DNA]</scope>
</reference>
<reference key="7">
    <citation type="journal article" date="2004" name="Genome Res.">
        <title>The status, quality, and expansion of the NIH full-length cDNA project: the Mammalian Gene Collection (MGC).</title>
        <authorList>
            <consortium name="The MGC Project Team"/>
        </authorList>
    </citation>
    <scope>NUCLEOTIDE SEQUENCE [LARGE SCALE MRNA] (ISOFORM 1)</scope>
    <source>
        <tissue>Lymph</tissue>
        <tissue>Placenta</tissue>
    </source>
</reference>
<reference key="8">
    <citation type="submission" date="2008-12" db="UniProtKB">
        <authorList>
            <person name="Bienvenut W.V."/>
            <person name="Zebisch A."/>
            <person name="Kolch W."/>
        </authorList>
    </citation>
    <scope>PROTEIN SEQUENCE OF 2-17 AND 205-215</scope>
    <scope>CLEAVAGE OF INITIATOR METHIONINE</scope>
    <scope>ACETYLATION AT SER-2</scope>
    <scope>IDENTIFICATION BY MASS SPECTROMETRY</scope>
    <source>
        <tissue>Colon carcinoma</tissue>
    </source>
</reference>
<reference key="9">
    <citation type="submission" date="2009-03" db="UniProtKB">
        <authorList>
            <person name="Bienvenut W.V."/>
            <person name="Waridel P."/>
            <person name="Quadroni M."/>
        </authorList>
    </citation>
    <scope>PROTEIN SEQUENCE OF 2-46; 130-147; 205-215 AND 252-264</scope>
    <scope>CLEAVAGE OF INITIATOR METHIONINE</scope>
    <scope>ACETYLATION AT SER-2</scope>
    <scope>IDENTIFICATION BY MASS SPECTROMETRY</scope>
    <source>
        <tissue>Embryonic kidney</tissue>
    </source>
</reference>
<reference key="10">
    <citation type="journal article" date="2009" name="Anal. Chem.">
        <title>Lys-N and trypsin cover complementary parts of the phosphoproteome in a refined SCX-based approach.</title>
        <authorList>
            <person name="Gauci S."/>
            <person name="Helbig A.O."/>
            <person name="Slijper M."/>
            <person name="Krijgsveld J."/>
            <person name="Heck A.J."/>
            <person name="Mohammed S."/>
        </authorList>
    </citation>
    <scope>ACETYLATION [LARGE SCALE ANALYSIS] AT SER-2</scope>
    <scope>CLEAVAGE OF INITIATOR METHIONINE [LARGE SCALE ANALYSIS]</scope>
    <scope>IDENTIFICATION BY MASS SPECTROMETRY [LARGE SCALE ANALYSIS]</scope>
</reference>
<reference key="11">
    <citation type="journal article" date="2009" name="Nat. Genet.">
        <title>Mutations in PYCR1 cause cutis laxa with progeroid features.</title>
        <authorList>
            <person name="Reversade B."/>
            <person name="Escande-Beillard N."/>
            <person name="Dimopoulou A."/>
            <person name="Fischer B."/>
            <person name="Chng S.C."/>
            <person name="Li Y."/>
            <person name="Shboul M."/>
            <person name="Tham P.-Y."/>
            <person name="Kayserili H."/>
            <person name="Al-Gazali L."/>
            <person name="Shahwan M."/>
            <person name="Brancati F."/>
            <person name="Lee H."/>
            <person name="O'Connor B.D."/>
            <person name="Schmidt-von Kegler M."/>
            <person name="Merriman B."/>
            <person name="Nelson S.F."/>
            <person name="Masri A."/>
            <person name="Alkazaleh F."/>
            <person name="Guerra D."/>
            <person name="Ferrari P."/>
            <person name="Nanda A."/>
            <person name="Rajab A."/>
            <person name="Markie D."/>
            <person name="Gray M."/>
            <person name="Nelson J."/>
            <person name="Grix A."/>
            <person name="Sommer A."/>
            <person name="Savarirayan R."/>
            <person name="Janecke A.R."/>
            <person name="Steichen E."/>
            <person name="Sillence D."/>
            <person name="Hausser I."/>
            <person name="Budde B."/>
            <person name="Nuernberg G."/>
            <person name="Nuernberg P."/>
            <person name="Seemann P."/>
            <person name="Kunkel D."/>
            <person name="Zambruno G."/>
            <person name="Dallapiccola B."/>
            <person name="Schuelke M."/>
            <person name="Robertson S."/>
            <person name="Hamamy H."/>
            <person name="Wollnik B."/>
            <person name="Van Maldergem L."/>
            <person name="Mundlos S."/>
            <person name="Kornak U."/>
        </authorList>
    </citation>
    <scope>FUNCTION</scope>
    <scope>SUBCELLULAR LOCATION</scope>
    <scope>VARIANTS ARCL2B GLY-119; HIS-119; THR-179; TRP-206 AND ARG-206</scope>
    <scope>VARIANTS ARCL3B HIS-251 AND THR-257</scope>
    <scope>VARIANT VAL-189</scope>
</reference>
<reference key="12">
    <citation type="journal article" date="2010" name="Sci. Signal.">
        <title>Quantitative phosphoproteomics reveals widespread full phosphorylation site occupancy during mitosis.</title>
        <authorList>
            <person name="Olsen J.V."/>
            <person name="Vermeulen M."/>
            <person name="Santamaria A."/>
            <person name="Kumar C."/>
            <person name="Miller M.L."/>
            <person name="Jensen L.J."/>
            <person name="Gnad F."/>
            <person name="Cox J."/>
            <person name="Jensen T.S."/>
            <person name="Nigg E.A."/>
            <person name="Brunak S."/>
            <person name="Mann M."/>
        </authorList>
    </citation>
    <scope>IDENTIFICATION BY MASS SPECTROMETRY [LARGE SCALE ANALYSIS]</scope>
    <source>
        <tissue>Cervix carcinoma</tissue>
    </source>
</reference>
<reference key="13">
    <citation type="journal article" date="2011" name="BMC Syst. Biol.">
        <title>Initial characterization of the human central proteome.</title>
        <authorList>
            <person name="Burkard T.R."/>
            <person name="Planyavsky M."/>
            <person name="Kaupe I."/>
            <person name="Breitwieser F.P."/>
            <person name="Buerckstuemmer T."/>
            <person name="Bennett K.L."/>
            <person name="Superti-Furga G."/>
            <person name="Colinge J."/>
        </authorList>
    </citation>
    <scope>IDENTIFICATION BY MASS SPECTROMETRY [LARGE SCALE ANALYSIS]</scope>
</reference>
<reference key="14">
    <citation type="journal article" date="2012" name="PLoS ONE">
        <title>Functional specialization in proline biosynthesis of melanoma.</title>
        <authorList>
            <person name="De Ingeniis J."/>
            <person name="Ratnikov B."/>
            <person name="Richardson A.D."/>
            <person name="Scott D.A."/>
            <person name="Aza-Blanc P."/>
            <person name="De S.K."/>
            <person name="Kazanov M."/>
            <person name="Pellecchia M."/>
            <person name="Ronai Z."/>
            <person name="Osterman A.L."/>
            <person name="Smith J.W."/>
        </authorList>
    </citation>
    <scope>FUNCTION</scope>
    <scope>CATALYTIC ACTIVITY</scope>
    <scope>BIOPHYSICOCHEMICAL PROPERTIES</scope>
    <scope>SUBCELLULAR LOCATION</scope>
    <scope>ACTIVITY REGULATION</scope>
</reference>
<reference key="15">
    <citation type="journal article" date="2013" name="J. Proteome Res.">
        <title>Toward a comprehensive characterization of a human cancer cell phosphoproteome.</title>
        <authorList>
            <person name="Zhou H."/>
            <person name="Di Palma S."/>
            <person name="Preisinger C."/>
            <person name="Peng M."/>
            <person name="Polat A.N."/>
            <person name="Heck A.J."/>
            <person name="Mohammed S."/>
        </authorList>
    </citation>
    <scope>PHOSPHORYLATION [LARGE SCALE ANALYSIS] AT SER-278 AND SER-301</scope>
    <scope>IDENTIFICATION BY MASS SPECTROMETRY [LARGE SCALE ANALYSIS]</scope>
    <source>
        <tissue>Cervix carcinoma</tissue>
        <tissue>Erythroleukemia</tissue>
    </source>
</reference>
<reference key="16">
    <citation type="journal article" date="2014" name="Oncotarget">
        <title>Frequent amplification of ORAOV1 gene in esophageal squamous cell cancer promotes an aggressive phenotype via proline metabolism and ROS production.</title>
        <authorList>
            <person name="Togashi Y."/>
            <person name="Arao T."/>
            <person name="Kato H."/>
            <person name="Matsumoto K."/>
            <person name="Terashima M."/>
            <person name="Hayashi H."/>
            <person name="de Velasco M.A."/>
            <person name="Fujita Y."/>
            <person name="Kimura H."/>
            <person name="Yasuda T."/>
            <person name="Shiozaki H."/>
            <person name="Nishio K."/>
        </authorList>
    </citation>
    <scope>INTERACTION WITH LTO1</scope>
</reference>
<reference key="17">
    <citation type="journal article" date="2015" name="Proteomics">
        <title>N-terminome analysis of the human mitochondrial proteome.</title>
        <authorList>
            <person name="Vaca Jacome A.S."/>
            <person name="Rabilloud T."/>
            <person name="Schaeffer-Reiss C."/>
            <person name="Rompais M."/>
            <person name="Ayoub D."/>
            <person name="Lane L."/>
            <person name="Bairoch A."/>
            <person name="Van Dorsselaer A."/>
            <person name="Carapito C."/>
        </authorList>
    </citation>
    <scope>IDENTIFICATION BY MASS SPECTROMETRY [LARGE SCALE ANALYSIS]</scope>
</reference>
<reference key="18">
    <citation type="journal article" date="2006" name="J. Mol. Biol.">
        <title>Crystal structure of human pyrroline-5-carboxylate reductase.</title>
        <authorList>
            <person name="Meng Z."/>
            <person name="Lou Z."/>
            <person name="Liu Z."/>
            <person name="Li M."/>
            <person name="Zhao X."/>
            <person name="Bartlam M."/>
            <person name="Rao Z."/>
        </authorList>
    </citation>
    <scope>X-RAY CRYSTALLOGRAPHY (2.8 ANGSTROMS) OF APOENZYME AND IN COMPLEXES WITH NAD; NADP AND SUBSTRATE ANALOG GLU</scope>
    <scope>CATALYTIC ACTIVITY</scope>
    <scope>FUNCTION</scope>
    <scope>ACTIVITY REGULATION</scope>
    <scope>BIOPHYSICOCHEMICAL PROPERTIES</scope>
    <scope>MUTAGENESIS OF GLU-221</scope>
    <scope>SUBUNIT</scope>
</reference>
<reference key="19">
    <citation type="submission" date="2009-02" db="PDB data bank">
        <title>Crystal structure of human pyrroline-5-carboxylate reductase.</title>
        <authorList>
            <consortium name="Structural genomics consortium (SGC)"/>
        </authorList>
    </citation>
    <scope>X-RAY CRYSTALLOGRAPHY (1.95 ANGSTROMS) OF 1-300 IN COMPLEX WITH NAD</scope>
</reference>
<reference evidence="17 18 19 20 21" key="20">
    <citation type="journal article" date="2017" name="J. Biol. Chem.">
        <title>Resolving the cofactor-binding site in the proline biosynthetic enzyme human pyrroline-5-carboxylate reductase 1.</title>
        <authorList>
            <person name="Christensen E.M."/>
            <person name="Patel S.M."/>
            <person name="Korasick D.A."/>
            <person name="Campbell A.C."/>
            <person name="Krause K.L."/>
            <person name="Becker D.F."/>
            <person name="Tanner J.J."/>
        </authorList>
    </citation>
    <scope>X-RAY CRYSTALLOGRAPHY (1.85 ANGSTROMS) OF 1-278 IN COMPLEX WITH L-PROLINE AND NADPH</scope>
    <scope>FUNCTION</scope>
    <scope>CATALYTIC ACTIVITY</scope>
    <scope>BIOPHYSICOCHEMICAL PROPERTIES</scope>
    <scope>SUBUNIT</scope>
    <scope>MUTAGENESIS OF THR-238</scope>
</reference>
<reference key="21">
    <citation type="journal article" date="2009" name="Am. J. Hum. Genet.">
        <title>Mutation in pyrroline-5-carboxylate reductase 1 gene in families with cutis laxa type 2.</title>
        <authorList>
            <person name="Guernsey D.L."/>
            <person name="Jiang H."/>
            <person name="Evans S.C."/>
            <person name="Ferguson M."/>
            <person name="Matsuoka M."/>
            <person name="Nightingale M."/>
            <person name="Rideout A.L."/>
            <person name="Provost S."/>
            <person name="Bedard K."/>
            <person name="Orr A."/>
            <person name="Dube M.-P."/>
            <person name="Ludman M."/>
            <person name="Samuels M.E."/>
        </authorList>
    </citation>
    <scope>VARIANT ARCL2B GLN-266</scope>
</reference>
<reference key="22">
    <citation type="journal article" date="2011" name="Am. J. Med. Genet. A">
        <title>Compound heterozygous mutations in PYCR1 further expand the phenotypic spectrum of De Barsy syndrome.</title>
        <authorList>
            <person name="Lin D.S."/>
            <person name="Chang J.H."/>
            <person name="Liu H.L."/>
            <person name="Wei C.H."/>
            <person name="Yeung C.Y."/>
            <person name="Ho C.S."/>
            <person name="Shu C.H."/>
            <person name="Chiang M.F."/>
            <person name="Chuang C.K."/>
            <person name="Huang Y.W."/>
            <person name="Wu T.Y."/>
            <person name="Jian Y.R."/>
            <person name="Huang Z.D."/>
            <person name="Lin S.P."/>
        </authorList>
    </citation>
    <scope>VARIANT ARCL3B GLU-248</scope>
    <scope>VARIANT ARG-297</scope>
</reference>
<accession>P32322</accession>
<accession>A6NFM2</accession>
<accession>B4DMU0</accession>
<accession>Q6FHI4</accession>
<accession>Q96DI6</accession>
<accession>Q9HBQ4</accession>
<sequence>MSVGFIGAGQLAFALAKGFTAAGVLAAHKIMASSPDMDLATVSALRKMGVKLTPHNKETVQHSDVLFLAVKPHIIPFILDEIGADIEDRHIVVSCAAGVTISSIEKKLSAFRPAPRVIRCMTNTPVVVREGATVYATGTHAQVEDGRLMEQLLSSVGFCTEVEEDLIDAVTGLSGSGPAYAFTALDALADGGVKMGLPRRLAVRLGAQALLGAAKMLLHSEQHPGQLKDNVSSPGGATIHALHVLESGGFRSLLINAVEASCIRTRELQSMADQEQVSPAAIKKTILDKVKLDSPAGTALSPSGHTKLLPRSLAPAGKD</sequence>
<proteinExistence type="evidence at protein level"/>
<protein>
    <recommendedName>
        <fullName>Pyrroline-5-carboxylate reductase 1, mitochondrial</fullName>
        <shortName>P5C reductase 1</shortName>
        <shortName>P5CR 1</shortName>
        <ecNumber evidence="2 6 8">1.5.1.2</ecNumber>
    </recommendedName>
</protein>
<gene>
    <name evidence="16" type="primary">PYCR1</name>
</gene>
<evidence type="ECO:0000256" key="1">
    <source>
        <dbReference type="SAM" id="MobiDB-lite"/>
    </source>
</evidence>
<evidence type="ECO:0000269" key="2">
    <source>
    </source>
</evidence>
<evidence type="ECO:0000269" key="3">
    <source>
    </source>
</evidence>
<evidence type="ECO:0000269" key="4">
    <source>
    </source>
</evidence>
<evidence type="ECO:0000269" key="5">
    <source>
    </source>
</evidence>
<evidence type="ECO:0000269" key="6">
    <source>
    </source>
</evidence>
<evidence type="ECO:0000269" key="7">
    <source>
    </source>
</evidence>
<evidence type="ECO:0000269" key="8">
    <source>
    </source>
</evidence>
<evidence type="ECO:0000269" key="9">
    <source ref="19"/>
</evidence>
<evidence type="ECO:0000269" key="10">
    <source ref="8"/>
</evidence>
<evidence type="ECO:0000269" key="11">
    <source ref="9"/>
</evidence>
<evidence type="ECO:0000303" key="12">
    <source>
    </source>
</evidence>
<evidence type="ECO:0000303" key="13">
    <source ref="2"/>
</evidence>
<evidence type="ECO:0000305" key="14"/>
<evidence type="ECO:0000305" key="15">
    <source>
    </source>
</evidence>
<evidence type="ECO:0000312" key="16">
    <source>
        <dbReference type="HGNC" id="HGNC:9721"/>
    </source>
</evidence>
<evidence type="ECO:0007744" key="17">
    <source>
        <dbReference type="PDB" id="5UAT"/>
    </source>
</evidence>
<evidence type="ECO:0007744" key="18">
    <source>
        <dbReference type="PDB" id="5UAU"/>
    </source>
</evidence>
<evidence type="ECO:0007744" key="19">
    <source>
        <dbReference type="PDB" id="5UAV"/>
    </source>
</evidence>
<evidence type="ECO:0007744" key="20">
    <source>
        <dbReference type="PDB" id="5UAW"/>
    </source>
</evidence>
<evidence type="ECO:0007744" key="21">
    <source>
        <dbReference type="PDB" id="5UAX"/>
    </source>
</evidence>
<evidence type="ECO:0007744" key="22">
    <source>
    </source>
</evidence>
<evidence type="ECO:0007744" key="23">
    <source>
    </source>
</evidence>
<evidence type="ECO:0007829" key="24">
    <source>
        <dbReference type="PDB" id="8TCU"/>
    </source>
</evidence>
<evidence type="ECO:0007829" key="25">
    <source>
        <dbReference type="PDB" id="8TD7"/>
    </source>
</evidence>
<dbReference type="EC" id="1.5.1.2" evidence="2 6 8"/>
<dbReference type="EMBL" id="M77836">
    <property type="protein sequence ID" value="AAA36407.1"/>
    <property type="molecule type" value="mRNA"/>
</dbReference>
<dbReference type="EMBL" id="AF218000">
    <property type="protein sequence ID" value="AAG17242.1"/>
    <property type="status" value="ALT_FRAME"/>
    <property type="molecule type" value="mRNA"/>
</dbReference>
<dbReference type="EMBL" id="AK297627">
    <property type="protein sequence ID" value="BAG60002.1"/>
    <property type="molecule type" value="mRNA"/>
</dbReference>
<dbReference type="EMBL" id="CR541769">
    <property type="protein sequence ID" value="CAG46568.1"/>
    <property type="molecule type" value="mRNA"/>
</dbReference>
<dbReference type="EMBL" id="AC145207">
    <property type="status" value="NOT_ANNOTATED_CDS"/>
    <property type="molecule type" value="Genomic_DNA"/>
</dbReference>
<dbReference type="EMBL" id="CH471099">
    <property type="protein sequence ID" value="EAW89724.1"/>
    <property type="molecule type" value="Genomic_DNA"/>
</dbReference>
<dbReference type="EMBL" id="BC001504">
    <property type="protein sequence ID" value="AAH01504.1"/>
    <property type="molecule type" value="mRNA"/>
</dbReference>
<dbReference type="EMBL" id="BC071842">
    <property type="protein sequence ID" value="AAH71842.1"/>
    <property type="molecule type" value="mRNA"/>
</dbReference>
<dbReference type="CCDS" id="CCDS11794.1">
    <molecule id="P32322-2"/>
</dbReference>
<dbReference type="CCDS" id="CCDS11795.1">
    <molecule id="P32322-1"/>
</dbReference>
<dbReference type="CCDS" id="CCDS62366.1">
    <molecule id="P32322-3"/>
</dbReference>
<dbReference type="PIR" id="A41770">
    <property type="entry name" value="A41770"/>
</dbReference>
<dbReference type="RefSeq" id="NP_001269209.1">
    <molecule id="P32322-1"/>
    <property type="nucleotide sequence ID" value="NM_001282280.2"/>
</dbReference>
<dbReference type="RefSeq" id="NP_001269210.1">
    <molecule id="P32322-3"/>
    <property type="nucleotide sequence ID" value="NM_001282281.2"/>
</dbReference>
<dbReference type="RefSeq" id="NP_008838.2">
    <molecule id="P32322-1"/>
    <property type="nucleotide sequence ID" value="NM_006907.3"/>
</dbReference>
<dbReference type="RefSeq" id="NP_722546.1">
    <molecule id="P32322-2"/>
    <property type="nucleotide sequence ID" value="NM_153824.3"/>
</dbReference>
<dbReference type="RefSeq" id="XP_005256438.1">
    <molecule id="P32322-1"/>
    <property type="nucleotide sequence ID" value="XM_005256381.3"/>
</dbReference>
<dbReference type="RefSeq" id="XP_011521885.1">
    <molecule id="P32322-1"/>
    <property type="nucleotide sequence ID" value="XM_011523583.3"/>
</dbReference>
<dbReference type="RefSeq" id="XP_011521886.1">
    <molecule id="P32322-1"/>
    <property type="nucleotide sequence ID" value="XM_011523584.4"/>
</dbReference>
<dbReference type="RefSeq" id="XP_024306617.1">
    <molecule id="P32322-1"/>
    <property type="nucleotide sequence ID" value="XM_024450849.2"/>
</dbReference>
<dbReference type="RefSeq" id="XP_054172792.1">
    <molecule id="P32322-1"/>
    <property type="nucleotide sequence ID" value="XM_054316817.1"/>
</dbReference>
<dbReference type="RefSeq" id="XP_054172793.1">
    <molecule id="P32322-1"/>
    <property type="nucleotide sequence ID" value="XM_054316818.1"/>
</dbReference>
<dbReference type="RefSeq" id="XP_054172794.1">
    <molecule id="P32322-1"/>
    <property type="nucleotide sequence ID" value="XM_054316819.1"/>
</dbReference>
<dbReference type="RefSeq" id="XP_054172795.1">
    <molecule id="P32322-1"/>
    <property type="nucleotide sequence ID" value="XM_054316820.1"/>
</dbReference>
<dbReference type="PDB" id="2GER">
    <property type="method" value="X-ray"/>
    <property type="resolution" value="3.10 A"/>
    <property type="chains" value="A/B/C/D/E=1-319"/>
</dbReference>
<dbReference type="PDB" id="2GR9">
    <property type="method" value="X-ray"/>
    <property type="resolution" value="3.10 A"/>
    <property type="chains" value="A/B/C/D/E=1-275"/>
</dbReference>
<dbReference type="PDB" id="2GRA">
    <property type="method" value="X-ray"/>
    <property type="resolution" value="3.10 A"/>
    <property type="chains" value="A/B/C/D/E=1-275"/>
</dbReference>
<dbReference type="PDB" id="2IZZ">
    <property type="method" value="X-ray"/>
    <property type="resolution" value="1.95 A"/>
    <property type="chains" value="A/B/C/D/E=1-300"/>
</dbReference>
<dbReference type="PDB" id="5UAT">
    <property type="method" value="X-ray"/>
    <property type="resolution" value="1.92 A"/>
    <property type="chains" value="A/B/C/D/E=1-300"/>
</dbReference>
<dbReference type="PDB" id="5UAU">
    <property type="method" value="X-ray"/>
    <property type="resolution" value="1.90 A"/>
    <property type="chains" value="A/B/C/D/E=1-300"/>
</dbReference>
<dbReference type="PDB" id="5UAV">
    <property type="method" value="X-ray"/>
    <property type="resolution" value="1.85 A"/>
    <property type="chains" value="A/B/C/D/E=1-300"/>
</dbReference>
<dbReference type="PDB" id="5UAW">
    <property type="method" value="X-ray"/>
    <property type="resolution" value="1.85 A"/>
    <property type="chains" value="A/B/C/D/E=1-300"/>
</dbReference>
<dbReference type="PDB" id="5UAX">
    <property type="method" value="X-ray"/>
    <property type="resolution" value="1.85 A"/>
    <property type="chains" value="A/B/C/D/E=1-270"/>
</dbReference>
<dbReference type="PDB" id="6XOZ">
    <property type="method" value="X-ray"/>
    <property type="resolution" value="2.35 A"/>
    <property type="chains" value="A/B/C/D/E=1-300"/>
</dbReference>
<dbReference type="PDB" id="6XP0">
    <property type="method" value="X-ray"/>
    <property type="resolution" value="1.95 A"/>
    <property type="chains" value="A/B/C/D/E=1-300"/>
</dbReference>
<dbReference type="PDB" id="6XP1">
    <property type="method" value="X-ray"/>
    <property type="resolution" value="1.75 A"/>
    <property type="chains" value="A/B/C/D/E=1-300"/>
</dbReference>
<dbReference type="PDB" id="6XP2">
    <property type="method" value="X-ray"/>
    <property type="resolution" value="2.30 A"/>
    <property type="chains" value="A/B/C/D/E=1-300"/>
</dbReference>
<dbReference type="PDB" id="6XP3">
    <property type="method" value="X-ray"/>
    <property type="resolution" value="1.93 A"/>
    <property type="chains" value="A/B/C/D/E=1-300"/>
</dbReference>
<dbReference type="PDB" id="8DKG">
    <property type="method" value="X-ray"/>
    <property type="resolution" value="1.85 A"/>
    <property type="chains" value="A/B/C/D/E=1-300"/>
</dbReference>
<dbReference type="PDB" id="8TCU">
    <property type="method" value="X-ray"/>
    <property type="resolution" value="2.00 A"/>
    <property type="chains" value="A/B/C/D/E=1-294"/>
</dbReference>
<dbReference type="PDB" id="8TCV">
    <property type="method" value="X-ray"/>
    <property type="resolution" value="1.74 A"/>
    <property type="chains" value="A/B/C/D/E=1-294"/>
</dbReference>
<dbReference type="PDB" id="8TCW">
    <property type="method" value="X-ray"/>
    <property type="resolution" value="1.94 A"/>
    <property type="chains" value="A/B/C/D/E=1-294"/>
</dbReference>
<dbReference type="PDB" id="8TCX">
    <property type="method" value="X-ray"/>
    <property type="resolution" value="1.72 A"/>
    <property type="chains" value="A/B/C/D/E=1-294"/>
</dbReference>
<dbReference type="PDB" id="8TCY">
    <property type="method" value="X-ray"/>
    <property type="resolution" value="1.95 A"/>
    <property type="chains" value="A/B/C/D/E=1-294"/>
</dbReference>
<dbReference type="PDB" id="8TCZ">
    <property type="method" value="X-ray"/>
    <property type="resolution" value="2.10 A"/>
    <property type="chains" value="A/B/C/D/E=1-294"/>
</dbReference>
<dbReference type="PDB" id="8TD0">
    <property type="method" value="X-ray"/>
    <property type="resolution" value="2.20 A"/>
    <property type="chains" value="A/B/C/D/E=1-294"/>
</dbReference>
<dbReference type="PDB" id="8TD1">
    <property type="method" value="X-ray"/>
    <property type="resolution" value="1.88 A"/>
    <property type="chains" value="A/B/C/D/E=1-294"/>
</dbReference>
<dbReference type="PDB" id="8TD2">
    <property type="method" value="X-ray"/>
    <property type="resolution" value="1.65 A"/>
    <property type="chains" value="A/B/C/D/E=1-294"/>
</dbReference>
<dbReference type="PDB" id="8TD3">
    <property type="method" value="X-ray"/>
    <property type="resolution" value="1.67 A"/>
    <property type="chains" value="A/B/C/D/E=1-294"/>
</dbReference>
<dbReference type="PDB" id="8TD4">
    <property type="method" value="X-ray"/>
    <property type="resolution" value="1.76 A"/>
    <property type="chains" value="A/B/C/D/E=1-294"/>
</dbReference>
<dbReference type="PDB" id="8TD5">
    <property type="method" value="X-ray"/>
    <property type="resolution" value="1.81 A"/>
    <property type="chains" value="A/B/C/D/E=1-294"/>
</dbReference>
<dbReference type="PDB" id="8TD6">
    <property type="method" value="X-ray"/>
    <property type="resolution" value="2.08 A"/>
    <property type="chains" value="A/B/C/D/E=1-294"/>
</dbReference>
<dbReference type="PDB" id="8TD7">
    <property type="method" value="X-ray"/>
    <property type="resolution" value="1.61 A"/>
    <property type="chains" value="A/B/C/D/E=1-294"/>
</dbReference>
<dbReference type="PDB" id="8TD8">
    <property type="method" value="X-ray"/>
    <property type="resolution" value="1.71 A"/>
    <property type="chains" value="A/B/C/D/E=1-294"/>
</dbReference>
<dbReference type="PDB" id="8TD9">
    <property type="method" value="X-ray"/>
    <property type="resolution" value="1.75 A"/>
    <property type="chains" value="A/B/C/D/E=1-294"/>
</dbReference>
<dbReference type="PDB" id="8TDB">
    <property type="method" value="X-ray"/>
    <property type="resolution" value="2.30 A"/>
    <property type="chains" value="A/B/C/D/E=1-294"/>
</dbReference>
<dbReference type="PDB" id="8TDC">
    <property type="method" value="X-ray"/>
    <property type="resolution" value="1.80 A"/>
    <property type="chains" value="A/B/C/D/E=1-294"/>
</dbReference>
<dbReference type="PDB" id="8TDD">
    <property type="method" value="X-ray"/>
    <property type="resolution" value="1.91 A"/>
    <property type="chains" value="A/B/C/D/E=1-294"/>
</dbReference>
<dbReference type="PDB" id="8VRE">
    <property type="method" value="X-ray"/>
    <property type="resolution" value="1.83 A"/>
    <property type="chains" value="A/B/C/D/E=1-294"/>
</dbReference>
<dbReference type="PDBsum" id="2GER"/>
<dbReference type="PDBsum" id="2GR9"/>
<dbReference type="PDBsum" id="2GRA"/>
<dbReference type="PDBsum" id="2IZZ"/>
<dbReference type="PDBsum" id="5UAT"/>
<dbReference type="PDBsum" id="5UAU"/>
<dbReference type="PDBsum" id="5UAV"/>
<dbReference type="PDBsum" id="5UAW"/>
<dbReference type="PDBsum" id="5UAX"/>
<dbReference type="PDBsum" id="6XOZ"/>
<dbReference type="PDBsum" id="6XP0"/>
<dbReference type="PDBsum" id="6XP1"/>
<dbReference type="PDBsum" id="6XP2"/>
<dbReference type="PDBsum" id="6XP3"/>
<dbReference type="PDBsum" id="8DKG"/>
<dbReference type="PDBsum" id="8TCU"/>
<dbReference type="PDBsum" id="8TCV"/>
<dbReference type="PDBsum" id="8TCW"/>
<dbReference type="PDBsum" id="8TCX"/>
<dbReference type="PDBsum" id="8TCY"/>
<dbReference type="PDBsum" id="8TCZ"/>
<dbReference type="PDBsum" id="8TD0"/>
<dbReference type="PDBsum" id="8TD1"/>
<dbReference type="PDBsum" id="8TD2"/>
<dbReference type="PDBsum" id="8TD3"/>
<dbReference type="PDBsum" id="8TD4"/>
<dbReference type="PDBsum" id="8TD5"/>
<dbReference type="PDBsum" id="8TD6"/>
<dbReference type="PDBsum" id="8TD7"/>
<dbReference type="PDBsum" id="8TD8"/>
<dbReference type="PDBsum" id="8TD9"/>
<dbReference type="PDBsum" id="8TDB"/>
<dbReference type="PDBsum" id="8TDC"/>
<dbReference type="PDBsum" id="8TDD"/>
<dbReference type="PDBsum" id="8VRE"/>
<dbReference type="SMR" id="P32322"/>
<dbReference type="BioGRID" id="111789">
    <property type="interactions" value="221"/>
</dbReference>
<dbReference type="ComplexPortal" id="CPX-2085">
    <property type="entry name" value="Pyrroline-5-carboxylate reductase 1 complex"/>
</dbReference>
<dbReference type="FunCoup" id="P32322">
    <property type="interactions" value="732"/>
</dbReference>
<dbReference type="IntAct" id="P32322">
    <property type="interactions" value="111"/>
</dbReference>
<dbReference type="MINT" id="P32322"/>
<dbReference type="STRING" id="9606.ENSP00000384949"/>
<dbReference type="BindingDB" id="P32322"/>
<dbReference type="ChEMBL" id="CHEMBL4296002"/>
<dbReference type="DrugBank" id="DB00157">
    <property type="generic name" value="NADH"/>
</dbReference>
<dbReference type="DrugBank" id="DB00172">
    <property type="generic name" value="Proline"/>
</dbReference>
<dbReference type="GlyGen" id="P32322">
    <property type="glycosylation" value="3 sites, 1 O-linked glycan (3 sites)"/>
</dbReference>
<dbReference type="iPTMnet" id="P32322"/>
<dbReference type="MetOSite" id="P32322"/>
<dbReference type="PhosphoSitePlus" id="P32322"/>
<dbReference type="SwissPalm" id="P32322"/>
<dbReference type="BioMuta" id="PYCR1"/>
<dbReference type="DMDM" id="60416434"/>
<dbReference type="jPOST" id="P32322"/>
<dbReference type="MassIVE" id="P32322"/>
<dbReference type="PaxDb" id="9606-ENSP00000384949"/>
<dbReference type="PeptideAtlas" id="P32322"/>
<dbReference type="ProteomicsDB" id="1058"/>
<dbReference type="ProteomicsDB" id="4639"/>
<dbReference type="ProteomicsDB" id="54872">
    <molecule id="P32322-1"/>
</dbReference>
<dbReference type="Pumba" id="P32322"/>
<dbReference type="TopDownProteomics" id="P32322-1">
    <molecule id="P32322-1"/>
</dbReference>
<dbReference type="Antibodypedia" id="32938">
    <property type="antibodies" value="251 antibodies from 30 providers"/>
</dbReference>
<dbReference type="DNASU" id="5831"/>
<dbReference type="Ensembl" id="ENST00000329875.13">
    <molecule id="P32322-1"/>
    <property type="protein sequence ID" value="ENSP00000328858.8"/>
    <property type="gene ID" value="ENSG00000183010.17"/>
</dbReference>
<dbReference type="Ensembl" id="ENST00000337943.9">
    <molecule id="P32322-2"/>
    <property type="protein sequence ID" value="ENSP00000336579.5"/>
    <property type="gene ID" value="ENSG00000183010.17"/>
</dbReference>
<dbReference type="Ensembl" id="ENST00000402252.6">
    <molecule id="P32322-3"/>
    <property type="protein sequence ID" value="ENSP00000384949.2"/>
    <property type="gene ID" value="ENSG00000183010.17"/>
</dbReference>
<dbReference type="Ensembl" id="ENST00000619204.4">
    <molecule id="P32322-1"/>
    <property type="protein sequence ID" value="ENSP00000479793.1"/>
    <property type="gene ID" value="ENSG00000183010.17"/>
</dbReference>
<dbReference type="GeneID" id="5831"/>
<dbReference type="KEGG" id="hsa:5831"/>
<dbReference type="MANE-Select" id="ENST00000329875.13">
    <property type="protein sequence ID" value="ENSP00000328858.8"/>
    <property type="RefSeq nucleotide sequence ID" value="NM_006907.4"/>
    <property type="RefSeq protein sequence ID" value="NP_008838.2"/>
</dbReference>
<dbReference type="UCSC" id="uc002kcp.5">
    <molecule id="P32322-1"/>
    <property type="organism name" value="human"/>
</dbReference>
<dbReference type="AGR" id="HGNC:9721"/>
<dbReference type="CTD" id="5831"/>
<dbReference type="DisGeNET" id="5831"/>
<dbReference type="GeneCards" id="PYCR1"/>
<dbReference type="HGNC" id="HGNC:9721">
    <property type="gene designation" value="PYCR1"/>
</dbReference>
<dbReference type="HPA" id="ENSG00000183010">
    <property type="expression patterns" value="Tissue enhanced (pancreas, salivary gland)"/>
</dbReference>
<dbReference type="MalaCards" id="PYCR1"/>
<dbReference type="MIM" id="179035">
    <property type="type" value="gene"/>
</dbReference>
<dbReference type="MIM" id="612940">
    <property type="type" value="phenotype"/>
</dbReference>
<dbReference type="MIM" id="614438">
    <property type="type" value="phenotype"/>
</dbReference>
<dbReference type="neXtProt" id="NX_P32322"/>
<dbReference type="OpenTargets" id="ENSG00000183010"/>
<dbReference type="Orphanet" id="357064">
    <property type="disease" value="Autosomal recessive cutis laxa type 2B"/>
</dbReference>
<dbReference type="Orphanet" id="2078">
    <property type="disease" value="Geroderma osteodysplastica"/>
</dbReference>
<dbReference type="Orphanet" id="293633">
    <property type="disease" value="PYCR1-related De Barsy syndrome"/>
</dbReference>
<dbReference type="PharmGKB" id="PA34064"/>
<dbReference type="VEuPathDB" id="HostDB:ENSG00000183010"/>
<dbReference type="eggNOG" id="KOG3124">
    <property type="taxonomic scope" value="Eukaryota"/>
</dbReference>
<dbReference type="GeneTree" id="ENSGT00950000183044"/>
<dbReference type="InParanoid" id="P32322"/>
<dbReference type="OrthoDB" id="10263291at2759"/>
<dbReference type="PAN-GO" id="P32322">
    <property type="GO annotations" value="2 GO annotations based on evolutionary models"/>
</dbReference>
<dbReference type="PhylomeDB" id="P32322"/>
<dbReference type="BioCyc" id="MetaCyc:HS06848-MONOMER"/>
<dbReference type="BRENDA" id="1.5.1.2">
    <property type="organism ID" value="2681"/>
</dbReference>
<dbReference type="PathwayCommons" id="P32322"/>
<dbReference type="Reactome" id="R-HSA-8964539">
    <property type="pathway name" value="Glutamate and glutamine metabolism"/>
</dbReference>
<dbReference type="SABIO-RK" id="P32322"/>
<dbReference type="SignaLink" id="P32322"/>
<dbReference type="UniPathway" id="UPA00098">
    <property type="reaction ID" value="UER00361"/>
</dbReference>
<dbReference type="BioGRID-ORCS" id="5831">
    <property type="hits" value="24 hits in 1161 CRISPR screens"/>
</dbReference>
<dbReference type="CD-CODE" id="DEE660B4">
    <property type="entry name" value="Stress granule"/>
</dbReference>
<dbReference type="ChiTaRS" id="PYCR1">
    <property type="organism name" value="human"/>
</dbReference>
<dbReference type="EvolutionaryTrace" id="P32322"/>
<dbReference type="GeneWiki" id="PYCR1"/>
<dbReference type="GenomeRNAi" id="5831"/>
<dbReference type="Pharos" id="P32322">
    <property type="development level" value="Tbio"/>
</dbReference>
<dbReference type="PRO" id="PR:P32322"/>
<dbReference type="Proteomes" id="UP000005640">
    <property type="component" value="Chromosome 17"/>
</dbReference>
<dbReference type="RNAct" id="P32322">
    <property type="molecule type" value="protein"/>
</dbReference>
<dbReference type="Bgee" id="ENSG00000183010">
    <property type="expression patterns" value="Expressed in stromal cell of endometrium and 150 other cell types or tissues"/>
</dbReference>
<dbReference type="ExpressionAtlas" id="P32322">
    <property type="expression patterns" value="baseline and differential"/>
</dbReference>
<dbReference type="GO" id="GO:0005759">
    <property type="term" value="C:mitochondrial matrix"/>
    <property type="evidence" value="ECO:0000304"/>
    <property type="project" value="Reactome"/>
</dbReference>
<dbReference type="GO" id="GO:0005739">
    <property type="term" value="C:mitochondrion"/>
    <property type="evidence" value="ECO:0000314"/>
    <property type="project" value="UniProtKB"/>
</dbReference>
<dbReference type="GO" id="GO:0042802">
    <property type="term" value="F:identical protein binding"/>
    <property type="evidence" value="ECO:0000353"/>
    <property type="project" value="IntAct"/>
</dbReference>
<dbReference type="GO" id="GO:0004735">
    <property type="term" value="F:pyrroline-5-carboxylate reductase activity"/>
    <property type="evidence" value="ECO:0000314"/>
    <property type="project" value="UniProtKB"/>
</dbReference>
<dbReference type="GO" id="GO:0034599">
    <property type="term" value="P:cellular response to oxidative stress"/>
    <property type="evidence" value="ECO:0000315"/>
    <property type="project" value="UniProtKB"/>
</dbReference>
<dbReference type="GO" id="GO:0055129">
    <property type="term" value="P:L-proline biosynthetic process"/>
    <property type="evidence" value="ECO:0000314"/>
    <property type="project" value="UniProtKB"/>
</dbReference>
<dbReference type="GO" id="GO:1903377">
    <property type="term" value="P:negative regulation of oxidative stress-induced neuron intrinsic apoptotic signaling pathway"/>
    <property type="evidence" value="ECO:0000315"/>
    <property type="project" value="ParkinsonsUK-UCL"/>
</dbReference>
<dbReference type="GO" id="GO:0006561">
    <property type="term" value="P:proline biosynthetic process"/>
    <property type="evidence" value="ECO:0000314"/>
    <property type="project" value="UniProtKB"/>
</dbReference>
<dbReference type="GO" id="GO:0051881">
    <property type="term" value="P:regulation of mitochondrial membrane potential"/>
    <property type="evidence" value="ECO:0000315"/>
    <property type="project" value="ParkinsonsUK-UCL"/>
</dbReference>
<dbReference type="FunFam" id="3.40.50.720:FF:000064">
    <property type="entry name" value="Pyrroline-5-carboxylate reductase 1"/>
    <property type="match status" value="1"/>
</dbReference>
<dbReference type="FunFam" id="1.10.3730.10:FF:000003">
    <property type="entry name" value="Pyrroline-5-carboxylate reductase 1, mitochondrial"/>
    <property type="match status" value="1"/>
</dbReference>
<dbReference type="Gene3D" id="3.40.50.720">
    <property type="entry name" value="NAD(P)-binding Rossmann-like Domain"/>
    <property type="match status" value="1"/>
</dbReference>
<dbReference type="Gene3D" id="1.10.3730.10">
    <property type="entry name" value="ProC C-terminal domain-like"/>
    <property type="match status" value="1"/>
</dbReference>
<dbReference type="HAMAP" id="MF_01925">
    <property type="entry name" value="P5C_reductase"/>
    <property type="match status" value="1"/>
</dbReference>
<dbReference type="InterPro" id="IPR008927">
    <property type="entry name" value="6-PGluconate_DH-like_C_sf"/>
</dbReference>
<dbReference type="InterPro" id="IPR036291">
    <property type="entry name" value="NAD(P)-bd_dom_sf"/>
</dbReference>
<dbReference type="InterPro" id="IPR028939">
    <property type="entry name" value="P5C_Rdtase_cat_N"/>
</dbReference>
<dbReference type="InterPro" id="IPR053790">
    <property type="entry name" value="P5CR-like_CS"/>
</dbReference>
<dbReference type="InterPro" id="IPR029036">
    <property type="entry name" value="P5CR_dimer"/>
</dbReference>
<dbReference type="InterPro" id="IPR000304">
    <property type="entry name" value="Pyrroline-COOH_reductase"/>
</dbReference>
<dbReference type="NCBIfam" id="TIGR00112">
    <property type="entry name" value="proC"/>
    <property type="match status" value="1"/>
</dbReference>
<dbReference type="PANTHER" id="PTHR11645">
    <property type="entry name" value="PYRROLINE-5-CARBOXYLATE REDUCTASE"/>
    <property type="match status" value="1"/>
</dbReference>
<dbReference type="PANTHER" id="PTHR11645:SF6">
    <property type="entry name" value="PYRROLINE-5-CARBOXYLATE REDUCTASE 1, MITOCHONDRIAL"/>
    <property type="match status" value="1"/>
</dbReference>
<dbReference type="Pfam" id="PF03807">
    <property type="entry name" value="F420_oxidored"/>
    <property type="match status" value="1"/>
</dbReference>
<dbReference type="Pfam" id="PF14748">
    <property type="entry name" value="P5CR_dimer"/>
    <property type="match status" value="1"/>
</dbReference>
<dbReference type="PIRSF" id="PIRSF000193">
    <property type="entry name" value="Pyrrol-5-carb_rd"/>
    <property type="match status" value="1"/>
</dbReference>
<dbReference type="SUPFAM" id="SSF48179">
    <property type="entry name" value="6-phosphogluconate dehydrogenase C-terminal domain-like"/>
    <property type="match status" value="1"/>
</dbReference>
<dbReference type="SUPFAM" id="SSF51735">
    <property type="entry name" value="NAD(P)-binding Rossmann-fold domains"/>
    <property type="match status" value="1"/>
</dbReference>
<dbReference type="PROSITE" id="PS00521">
    <property type="entry name" value="P5CR"/>
    <property type="match status" value="1"/>
</dbReference>
<feature type="initiator methionine" description="Removed" evidence="10 11 22">
    <location>
        <position position="1"/>
    </location>
</feature>
<feature type="chain" id="PRO_0000187314" description="Pyrroline-5-carboxylate reductase 1, mitochondrial">
    <location>
        <begin position="2"/>
        <end position="319"/>
    </location>
</feature>
<feature type="region of interest" description="Disordered" evidence="1">
    <location>
        <begin position="294"/>
        <end position="319"/>
    </location>
</feature>
<feature type="binding site" evidence="9">
    <location>
        <begin position="6"/>
        <end position="11"/>
    </location>
    <ligand>
        <name>NADP(+)</name>
        <dbReference type="ChEBI" id="CHEBI:58349"/>
    </ligand>
</feature>
<feature type="binding site" evidence="8 17 19">
    <location>
        <position position="8"/>
    </location>
    <ligand>
        <name>NADPH</name>
        <dbReference type="ChEBI" id="CHEBI:57783"/>
    </ligand>
</feature>
<feature type="binding site" evidence="8 17 19">
    <location>
        <position position="10"/>
    </location>
    <ligand>
        <name>NADPH</name>
        <dbReference type="ChEBI" id="CHEBI:57783"/>
    </ligand>
</feature>
<feature type="binding site" evidence="8 17 19">
    <location>
        <position position="11"/>
    </location>
    <ligand>
        <name>NADPH</name>
        <dbReference type="ChEBI" id="CHEBI:57783"/>
    </ligand>
</feature>
<feature type="binding site" evidence="9">
    <location>
        <position position="34"/>
    </location>
    <ligand>
        <name>NADP(+)</name>
        <dbReference type="ChEBI" id="CHEBI:58349"/>
    </ligand>
</feature>
<feature type="binding site" evidence="8 17">
    <location>
        <position position="34"/>
    </location>
    <ligand>
        <name>NADPH</name>
        <dbReference type="ChEBI" id="CHEBI:57783"/>
    </ligand>
</feature>
<feature type="binding site" evidence="8 17 19">
    <location>
        <position position="36"/>
    </location>
    <ligand>
        <name>NADPH</name>
        <dbReference type="ChEBI" id="CHEBI:57783"/>
    </ligand>
</feature>
<feature type="binding site" evidence="9">
    <location>
        <position position="56"/>
    </location>
    <ligand>
        <name>NADP(+)</name>
        <dbReference type="ChEBI" id="CHEBI:58349"/>
    </ligand>
</feature>
<feature type="binding site" evidence="8 19">
    <location>
        <position position="56"/>
    </location>
    <ligand>
        <name>NADPH</name>
        <dbReference type="ChEBI" id="CHEBI:57783"/>
    </ligand>
</feature>
<feature type="binding site" evidence="9">
    <location>
        <begin position="69"/>
        <end position="72"/>
    </location>
    <ligand>
        <name>NADP(+)</name>
        <dbReference type="ChEBI" id="CHEBI:58349"/>
    </ligand>
</feature>
<feature type="binding site" evidence="8 17 19">
    <location>
        <position position="70"/>
    </location>
    <ligand>
        <name>NADPH</name>
        <dbReference type="ChEBI" id="CHEBI:57783"/>
    </ligand>
</feature>
<feature type="binding site" evidence="8 19">
    <location>
        <position position="71"/>
    </location>
    <ligand>
        <name>NADPH</name>
        <dbReference type="ChEBI" id="CHEBI:57783"/>
    </ligand>
</feature>
<feature type="binding site" evidence="9">
    <location>
        <begin position="95"/>
        <end position="97"/>
    </location>
    <ligand>
        <name>NADP(+)</name>
        <dbReference type="ChEBI" id="CHEBI:58349"/>
    </ligand>
</feature>
<feature type="binding site" evidence="8 17 19">
    <location>
        <position position="97"/>
    </location>
    <ligand>
        <name>NADPH</name>
        <dbReference type="ChEBI" id="CHEBI:57783"/>
    </ligand>
</feature>
<feature type="binding site" evidence="8 18">
    <location>
        <position position="164"/>
    </location>
    <ligand>
        <name>L-proline</name>
        <dbReference type="ChEBI" id="CHEBI:60039"/>
    </ligand>
</feature>
<feature type="binding site" evidence="8 17">
    <location>
        <position position="230"/>
    </location>
    <ligand>
        <name>NADPH</name>
        <dbReference type="ChEBI" id="CHEBI:57783"/>
    </ligand>
</feature>
<feature type="binding site" evidence="8 18">
    <location>
        <position position="237"/>
    </location>
    <ligand>
        <name>L-proline</name>
        <dbReference type="ChEBI" id="CHEBI:60039"/>
    </ligand>
</feature>
<feature type="binding site" evidence="8 18">
    <location>
        <position position="238"/>
    </location>
    <ligand>
        <name>L-proline</name>
        <dbReference type="ChEBI" id="CHEBI:60039"/>
    </ligand>
</feature>
<feature type="modified residue" description="N-acetylserine" evidence="10 11 22">
    <location>
        <position position="2"/>
    </location>
</feature>
<feature type="modified residue" description="Phosphoserine" evidence="23">
    <location>
        <position position="278"/>
    </location>
</feature>
<feature type="modified residue" description="Phosphoserine" evidence="23">
    <location>
        <position position="301"/>
    </location>
</feature>
<feature type="splice variant" id="VSP_054616" description="In isoform 3." evidence="12">
    <original>M</original>
    <variation>MVGGGRRVGRDEPVPSVGALGQGSPDSM</variation>
    <location>
        <position position="1"/>
    </location>
</feature>
<feature type="splice variant" id="VSP_044507" description="In isoform 2." evidence="13">
    <original>VKLDSPAGTALSPSGHTKLLPRSLAPAGKD</original>
    <variation>DHLPLELGSPEGLHPLLLQYQLARAPS</variation>
    <location>
        <begin position="290"/>
        <end position="319"/>
    </location>
</feature>
<feature type="sequence variant" id="VAR_059068" description="In ARCL2B; dbSNP:rs121918376." evidence="4">
    <original>R</original>
    <variation>G</variation>
    <location>
        <position position="119"/>
    </location>
</feature>
<feature type="sequence variant" id="VAR_059069" description="In ARCL2B; dbSNP:rs121918377." evidence="4">
    <original>R</original>
    <variation>H</variation>
    <location>
        <position position="119"/>
    </location>
</feature>
<feature type="sequence variant" id="VAR_059070" description="In ARCL2B; dbSNP:rs139751598." evidence="4">
    <original>A</original>
    <variation>T</variation>
    <location>
        <position position="179"/>
    </location>
</feature>
<feature type="sequence variant" id="VAR_059071" evidence="4">
    <original>A</original>
    <variation>V</variation>
    <location>
        <position position="189"/>
    </location>
</feature>
<feature type="sequence variant" id="VAR_059072" description="In ARCL2B; dbSNP:rs121918375." evidence="4">
    <original>G</original>
    <variation>R</variation>
    <location>
        <position position="206"/>
    </location>
</feature>
<feature type="sequence variant" id="VAR_059073" description="In ARCL2B; dbSNP:rs121918375." evidence="4">
    <original>G</original>
    <variation>W</variation>
    <location>
        <position position="206"/>
    </location>
</feature>
<feature type="sequence variant" id="VAR_067600" description="In ARCL3B; results in a reduction of protein expression in skin fibroblasts from the patient; dbSNP:rs281875319." evidence="5">
    <original>G</original>
    <variation>E</variation>
    <location>
        <position position="248"/>
    </location>
</feature>
<feature type="sequence variant" id="VAR_059074" description="In ARCL3B; dbSNP:rs121918378." evidence="4">
    <original>R</original>
    <variation>H</variation>
    <location>
        <position position="251"/>
    </location>
</feature>
<feature type="sequence variant" id="VAR_059075" description="In ARCL3B; dbSNP:rs281875318." evidence="4">
    <original>A</original>
    <variation>T</variation>
    <location>
        <position position="257"/>
    </location>
</feature>
<feature type="sequence variant" id="VAR_059076" description="In ARCL2B; may cause skipping of exon 6; dbSNP:rs121918374." evidence="3">
    <original>R</original>
    <variation>Q</variation>
    <location>
        <position position="266"/>
    </location>
</feature>
<feature type="sequence variant" id="VAR_067601" evidence="5">
    <original>G</original>
    <variation>R</variation>
    <location>
        <position position="297"/>
    </location>
</feature>
<feature type="mutagenesis site" description="Reduced enzyme activity." evidence="2">
    <original>E</original>
    <variation>A</variation>
    <location>
        <position position="221"/>
    </location>
</feature>
<feature type="mutagenesis site" description="Decreased pyrroline-5-carboxylate reductase activity." evidence="8">
    <original>T</original>
    <variation>A</variation>
    <location>
        <position position="238"/>
    </location>
</feature>
<feature type="sequence conflict" description="In Ref. 1; AAA36407." evidence="14" ref="1">
    <original>S</original>
    <variation>T</variation>
    <location>
        <position position="155"/>
    </location>
</feature>
<feature type="sequence conflict" description="In Ref. 4; CAG46568." evidence="14" ref="4">
    <original>G</original>
    <variation>S</variation>
    <location>
        <position position="317"/>
    </location>
</feature>
<feature type="strand" evidence="25">
    <location>
        <begin position="3"/>
        <end position="6"/>
    </location>
</feature>
<feature type="helix" evidence="25">
    <location>
        <begin position="10"/>
        <end position="21"/>
    </location>
</feature>
<feature type="helix" evidence="25">
    <location>
        <begin position="27"/>
        <end position="29"/>
    </location>
</feature>
<feature type="strand" evidence="25">
    <location>
        <begin position="30"/>
        <end position="33"/>
    </location>
</feature>
<feature type="helix" evidence="25">
    <location>
        <begin position="40"/>
        <end position="48"/>
    </location>
</feature>
<feature type="strand" evidence="25">
    <location>
        <begin position="51"/>
        <end position="54"/>
    </location>
</feature>
<feature type="helix" evidence="25">
    <location>
        <begin position="56"/>
        <end position="62"/>
    </location>
</feature>
<feature type="strand" evidence="25">
    <location>
        <begin position="64"/>
        <end position="68"/>
    </location>
</feature>
<feature type="helix" evidence="25">
    <location>
        <begin position="72"/>
        <end position="74"/>
    </location>
</feature>
<feature type="helix" evidence="25">
    <location>
        <begin position="75"/>
        <end position="82"/>
    </location>
</feature>
<feature type="helix" evidence="25">
    <location>
        <begin position="83"/>
        <end position="85"/>
    </location>
</feature>
<feature type="strand" evidence="25">
    <location>
        <begin position="91"/>
        <end position="94"/>
    </location>
</feature>
<feature type="strand" evidence="24">
    <location>
        <begin position="96"/>
        <end position="98"/>
    </location>
</feature>
<feature type="helix" evidence="25">
    <location>
        <begin position="101"/>
        <end position="109"/>
    </location>
</feature>
<feature type="strand" evidence="25">
    <location>
        <begin position="112"/>
        <end position="114"/>
    </location>
</feature>
<feature type="strand" evidence="25">
    <location>
        <begin position="116"/>
        <end position="121"/>
    </location>
</feature>
<feature type="helix" evidence="25">
    <location>
        <begin position="124"/>
        <end position="128"/>
    </location>
</feature>
<feature type="strand" evidence="25">
    <location>
        <begin position="131"/>
        <end position="137"/>
    </location>
</feature>
<feature type="helix" evidence="25">
    <location>
        <begin position="143"/>
        <end position="154"/>
    </location>
</feature>
<feature type="strand" evidence="25">
    <location>
        <begin position="157"/>
        <end position="161"/>
    </location>
</feature>
<feature type="helix" evidence="25">
    <location>
        <begin position="164"/>
        <end position="166"/>
    </location>
</feature>
<feature type="helix" evidence="25">
    <location>
        <begin position="167"/>
        <end position="173"/>
    </location>
</feature>
<feature type="turn" evidence="25">
    <location>
        <begin position="174"/>
        <end position="176"/>
    </location>
</feature>
<feature type="helix" evidence="25">
    <location>
        <begin position="177"/>
        <end position="194"/>
    </location>
</feature>
<feature type="helix" evidence="25">
    <location>
        <begin position="199"/>
        <end position="219"/>
    </location>
</feature>
<feature type="helix" evidence="25">
    <location>
        <begin position="224"/>
        <end position="231"/>
    </location>
</feature>
<feature type="helix" evidence="25">
    <location>
        <begin position="237"/>
        <end position="247"/>
    </location>
</feature>
<feature type="helix" evidence="25">
    <location>
        <begin position="250"/>
        <end position="274"/>
    </location>
</feature>
<comment type="function">
    <text evidence="2 4 6 8">Oxidoreductase that catalyzes the last step in proline biosynthesis, which corresponds to the reduction of pyrroline-5-carboxylate to L-proline using NAD(P)H (PubMed:16730026, PubMed:19648921, PubMed:23024808, PubMed:28258219). At physiologic concentrations, has higher specific activity in the presence of NADH (PubMed:16730026, PubMed:23024808). Involved in the cellular response to oxidative stress (PubMed:16730026, PubMed:19648921).</text>
</comment>
<comment type="catalytic activity">
    <reaction evidence="2 6 8">
        <text>L-proline + NADP(+) = (S)-1-pyrroline-5-carboxylate + NADPH + 2 H(+)</text>
        <dbReference type="Rhea" id="RHEA:14109"/>
        <dbReference type="ChEBI" id="CHEBI:15378"/>
        <dbReference type="ChEBI" id="CHEBI:17388"/>
        <dbReference type="ChEBI" id="CHEBI:57783"/>
        <dbReference type="ChEBI" id="CHEBI:58349"/>
        <dbReference type="ChEBI" id="CHEBI:60039"/>
        <dbReference type="EC" id="1.5.1.2"/>
    </reaction>
    <physiologicalReaction direction="right-to-left" evidence="15">
        <dbReference type="Rhea" id="RHEA:14111"/>
    </physiologicalReaction>
</comment>
<comment type="catalytic activity">
    <reaction evidence="2 6 8">
        <text>L-proline + NAD(+) = (S)-1-pyrroline-5-carboxylate + NADH + 2 H(+)</text>
        <dbReference type="Rhea" id="RHEA:14105"/>
        <dbReference type="ChEBI" id="CHEBI:15378"/>
        <dbReference type="ChEBI" id="CHEBI:17388"/>
        <dbReference type="ChEBI" id="CHEBI:57540"/>
        <dbReference type="ChEBI" id="CHEBI:57945"/>
        <dbReference type="ChEBI" id="CHEBI:60039"/>
        <dbReference type="EC" id="1.5.1.2"/>
    </reaction>
    <physiologicalReaction direction="right-to-left" evidence="15">
        <dbReference type="Rhea" id="RHEA:14107"/>
    </physiologicalReaction>
</comment>
<comment type="activity regulation">
    <text evidence="2 6">Subject to competitive inhibition by the reaction product proline (PubMed:16730026, PubMed:23024808). Subject to competitive inhibition by stearoyl coenzyme A (PubMed:16730026).</text>
</comment>
<comment type="biophysicochemical properties">
    <kinetics>
        <KM evidence="6">1.72 mM for (S)-1-pyrroline-5-carboxylate (in the presence of NADH)</KM>
        <KM evidence="6">2.15 mM for (S)-1-pyrroline-5-carboxylate (in the presence of NADPH)</KM>
        <KM evidence="8">0.667 mM for (S)-1-pyrroline-5-carboxylate (in the presence of NADPH)</KM>
        <KM evidence="6">0.26 mM for NADH</KM>
        <KM evidence="6">1.2 mM for NADPH</KM>
        <KM evidence="8">0.07 mM for NADH</KM>
        <KM evidence="8">0.283 mM for NADPH</KM>
        <KM evidence="2">0.151 mM for NAD(+)</KM>
        <KM evidence="2">3.06 mM for NADP(+)</KM>
        <text evidence="6 8">kcat is 70.4 sec(-1) for the NADH-dependent reduction of (S)-1-pyrroline-5-carboxylate. kcat is 29.4 sec(-1) for the NADPH-dependent reduction of (S)-1-pyrroline-5-carboxylate (PubMed:23024808). kcat is 31 sec(-1) for the NADPH-dependent reduction of (S)-1-pyrroline-5-carboxylate (PubMed:28258219). kcat is 63.9 sec(-1) for the oxidation of NADH (PubMed:23024808). kcat is 45.6 sec(-1) for the oxidation of NADPH (PubMed:23024808). kcat is 218 sec(-1) for the oxidation of NADH (PubMed:28258219). kcat is 74 sec(-1) for the oxidation of NADPH (PubMed:28258219).</text>
    </kinetics>
</comment>
<comment type="pathway">
    <text>Amino-acid biosynthesis; L-proline biosynthesis; L-proline from L-glutamate 5-semialdehyde: step 1/1.</text>
</comment>
<comment type="subunit">
    <text evidence="2 7 8 9">Homodecamer; composed of 5 homodimers (PubMed:16730026, PubMed:28258219, Ref.19). Interacts with LTO1 (PubMed:24930674).</text>
</comment>
<comment type="interaction">
    <interactant intactId="EBI-848624">
        <id>P32322</id>
    </interactant>
    <interactant intactId="EBI-1164361">
        <id>Q99497</id>
        <label>PARK7</label>
    </interactant>
    <organismsDiffer>false</organismsDiffer>
    <experiments>5</experiments>
</comment>
<comment type="interaction">
    <interactant intactId="EBI-848624">
        <id>P32322</id>
    </interactant>
    <interactant intactId="EBI-848624">
        <id>P32322</id>
        <label>PYCR1</label>
    </interactant>
    <organismsDiffer>false</organismsDiffer>
    <experiments>5</experiments>
</comment>
<comment type="interaction">
    <interactant intactId="EBI-848624">
        <id>P32322</id>
    </interactant>
    <interactant intactId="EBI-12076664">
        <id>O14787-2</id>
        <label>TNPO2</label>
    </interactant>
    <organismsDiffer>false</organismsDiffer>
    <experiments>3</experiments>
</comment>
<comment type="subcellular location">
    <subcellularLocation>
        <location evidence="4 6">Mitochondrion</location>
    </subcellularLocation>
</comment>
<comment type="alternative products">
    <event type="alternative splicing"/>
    <isoform>
        <id>P32322-1</id>
        <name>1</name>
        <sequence type="displayed"/>
    </isoform>
    <isoform>
        <id>P32322-2</id>
        <name>2</name>
        <sequence type="described" ref="VSP_044507"/>
    </isoform>
    <isoform>
        <id>P32322-3</id>
        <name>3</name>
        <sequence type="described" ref="VSP_054616"/>
    </isoform>
</comment>
<comment type="disease" evidence="3 4">
    <disease id="DI-01462">
        <name>Cutis laxa, autosomal recessive, 2B</name>
        <acronym>ARCL2B</acronym>
        <description>A disorder characterized by an excessive congenital skin wrinkling, a large fontanelle with delayed closure, a typical facial appearance with downslanting palpebral fissures, a general connective tissue weakness, and varying degrees of growth and developmental delay and neurological abnormalities. Patients do not manifest metabolic abnormalities.</description>
        <dbReference type="MIM" id="612940"/>
    </disease>
    <text>The disease is caused by variants affecting the gene represented in this entry.</text>
</comment>
<comment type="disease" evidence="4 5">
    <disease id="DI-03319">
        <name>Cutis laxa, autosomal recessive, 3B</name>
        <acronym>ARCL3B</acronym>
        <description>A disorder characterized by an aged appearance with distinctive facial features, sparse hair, ophthalmologic abnormalities, intrauterine growth retardation, and cutis laxa.</description>
        <dbReference type="MIM" id="614438"/>
    </disease>
    <text>The disease is caused by variants affecting the gene represented in this entry.</text>
</comment>
<comment type="similarity">
    <text evidence="14">Belongs to the pyrroline-5-carboxylate reductase family.</text>
</comment>
<comment type="sequence caution" evidence="14">
    <conflict type="frameshift">
        <sequence resource="EMBL-CDS" id="AAG17242"/>
    </conflict>
</comment>
<comment type="online information" name="Mendelian genes pyrroline-5-carboxylate reductase 1 (PYCR1)">
    <link uri="https://databases.lovd.nl/shared/genes/PYCR1"/>
    <text>Leiden Open Variation Database (LOVD)</text>
</comment>
<name>P5CR1_HUMAN</name>
<keyword id="KW-0002">3D-structure</keyword>
<keyword id="KW-0007">Acetylation</keyword>
<keyword id="KW-0025">Alternative splicing</keyword>
<keyword id="KW-0028">Amino-acid biosynthesis</keyword>
<keyword id="KW-0903">Direct protein sequencing</keyword>
<keyword id="KW-0225">Disease variant</keyword>
<keyword id="KW-0496">Mitochondrion</keyword>
<keyword id="KW-0521">NADP</keyword>
<keyword id="KW-0560">Oxidoreductase</keyword>
<keyword id="KW-0597">Phosphoprotein</keyword>
<keyword id="KW-0641">Proline biosynthesis</keyword>
<keyword id="KW-1267">Proteomics identification</keyword>
<keyword id="KW-1185">Reference proteome</keyword>
<keyword id="KW-0346">Stress response</keyword>
<organism>
    <name type="scientific">Homo sapiens</name>
    <name type="common">Human</name>
    <dbReference type="NCBI Taxonomy" id="9606"/>
    <lineage>
        <taxon>Eukaryota</taxon>
        <taxon>Metazoa</taxon>
        <taxon>Chordata</taxon>
        <taxon>Craniata</taxon>
        <taxon>Vertebrata</taxon>
        <taxon>Euteleostomi</taxon>
        <taxon>Mammalia</taxon>
        <taxon>Eutheria</taxon>
        <taxon>Euarchontoglires</taxon>
        <taxon>Primates</taxon>
        <taxon>Haplorrhini</taxon>
        <taxon>Catarrhini</taxon>
        <taxon>Hominidae</taxon>
        <taxon>Homo</taxon>
    </lineage>
</organism>